<name>OXDA3_CRYNH</name>
<sequence length="373" mass="40826">MVKYDAVILGSGVLGLSIANELTLKGLKVAVVGNDLPEDLDSTGFASPWAGANWHSFAINEAERRRDQYTFEQFARLAKEIPHLCERRAYYYLWKGEGAWKEPWYKDVVFGYRMLKPEEVHAPFKYGVTYEAYTLNTPLYLLHLASTLRSARVPILRARLSSLDEAYSLPQLGSVDLVINATGLGARSLLGVEDPTVYPAKGQTVLVRAPVKECYGLVDPLAQPGQKAYIIPRPGPDGYVILGGCYFPNDWSTNVNPEVAEEILKQCHTLCPRLDGKGGKGTWKDIEVISHNVGLRPVREAGLRCEVEERVIGEKVNAGLATKGGKVGGGRKVGVVHAYGIGPAGYQASLGIAKEVGELVDGWMKKSNKKAKL</sequence>
<protein>
    <recommendedName>
        <fullName evidence="8">D-amino-acid oxidase 3</fullName>
        <shortName evidence="9">DAAO</shortName>
        <shortName evidence="9">DAMOX</shortName>
        <shortName evidence="8">DAO</shortName>
        <ecNumber evidence="1">1.4.3.3</ecNumber>
    </recommendedName>
    <alternativeName>
        <fullName evidence="8">CnDAO3</fullName>
    </alternativeName>
</protein>
<dbReference type="EC" id="1.4.3.3" evidence="1"/>
<dbReference type="EMBL" id="CP003825">
    <property type="protein sequence ID" value="AFR95301.1"/>
    <property type="molecule type" value="Genomic_DNA"/>
</dbReference>
<dbReference type="RefSeq" id="XP_012050213.1">
    <property type="nucleotide sequence ID" value="XM_012194823.1"/>
</dbReference>
<dbReference type="SMR" id="J9VPE7"/>
<dbReference type="GeneID" id="23886146"/>
<dbReference type="KEGG" id="cng:CNAG_02532"/>
<dbReference type="VEuPathDB" id="FungiDB:CNAG_02532"/>
<dbReference type="HOGENOM" id="CLU_034311_1_0_1"/>
<dbReference type="OrthoDB" id="2765at5206"/>
<dbReference type="Proteomes" id="UP000010091">
    <property type="component" value="Chromosome 6"/>
</dbReference>
<dbReference type="GO" id="GO:0005782">
    <property type="term" value="C:peroxisomal matrix"/>
    <property type="evidence" value="ECO:0007669"/>
    <property type="project" value="UniProtKB-SubCell"/>
</dbReference>
<dbReference type="GO" id="GO:0003884">
    <property type="term" value="F:D-amino-acid oxidase activity"/>
    <property type="evidence" value="ECO:0000250"/>
    <property type="project" value="UniProtKB"/>
</dbReference>
<dbReference type="GO" id="GO:0071949">
    <property type="term" value="F:FAD binding"/>
    <property type="evidence" value="ECO:0007669"/>
    <property type="project" value="InterPro"/>
</dbReference>
<dbReference type="GO" id="GO:0019478">
    <property type="term" value="P:D-amino acid catabolic process"/>
    <property type="evidence" value="ECO:0007669"/>
    <property type="project" value="TreeGrafter"/>
</dbReference>
<dbReference type="GO" id="GO:0098754">
    <property type="term" value="P:detoxification"/>
    <property type="evidence" value="ECO:0000315"/>
    <property type="project" value="UniProtKB"/>
</dbReference>
<dbReference type="FunFam" id="3.30.9.10:FF:000018">
    <property type="entry name" value="D-amino acid oxidase, putative"/>
    <property type="match status" value="1"/>
</dbReference>
<dbReference type="Gene3D" id="3.30.9.10">
    <property type="entry name" value="D-Amino Acid Oxidase, subunit A, domain 2"/>
    <property type="match status" value="1"/>
</dbReference>
<dbReference type="Gene3D" id="3.40.50.720">
    <property type="entry name" value="NAD(P)-binding Rossmann-like Domain"/>
    <property type="match status" value="1"/>
</dbReference>
<dbReference type="InterPro" id="IPR023209">
    <property type="entry name" value="DAO"/>
</dbReference>
<dbReference type="InterPro" id="IPR006076">
    <property type="entry name" value="FAD-dep_OxRdtase"/>
</dbReference>
<dbReference type="PANTHER" id="PTHR11530">
    <property type="entry name" value="D-AMINO ACID OXIDASE"/>
    <property type="match status" value="1"/>
</dbReference>
<dbReference type="PANTHER" id="PTHR11530:SF30">
    <property type="entry name" value="FAD DEPENDENT OXIDOREDUCTASE DOMAIN-CONTAINING PROTEIN"/>
    <property type="match status" value="1"/>
</dbReference>
<dbReference type="Pfam" id="PF01266">
    <property type="entry name" value="DAO"/>
    <property type="match status" value="1"/>
</dbReference>
<dbReference type="PIRSF" id="PIRSF000189">
    <property type="entry name" value="D-aa_oxidase"/>
    <property type="match status" value="1"/>
</dbReference>
<dbReference type="SUPFAM" id="SSF54373">
    <property type="entry name" value="FAD-linked reductases, C-terminal domain"/>
    <property type="match status" value="1"/>
</dbReference>
<dbReference type="SUPFAM" id="SSF51971">
    <property type="entry name" value="Nucleotide-binding domain"/>
    <property type="match status" value="1"/>
</dbReference>
<gene>
    <name evidence="8" type="primary">DAO3</name>
    <name evidence="10" type="ORF">CNAG_02532</name>
</gene>
<feature type="signal peptide" evidence="5">
    <location>
        <begin position="1"/>
        <end position="19"/>
    </location>
</feature>
<feature type="chain" id="PRO_0000460040" description="D-amino-acid oxidase 3">
    <location>
        <begin position="20"/>
        <end position="373"/>
    </location>
</feature>
<feature type="short sequence motif" description="Microbody targeting signal" evidence="5">
    <location>
        <begin position="371"/>
        <end position="373"/>
    </location>
</feature>
<feature type="binding site" evidence="4">
    <location>
        <position position="11"/>
    </location>
    <ligand>
        <name>FAD</name>
        <dbReference type="ChEBI" id="CHEBI:57692"/>
    </ligand>
</feature>
<feature type="binding site" evidence="4">
    <location>
        <position position="14"/>
    </location>
    <ligand>
        <name>FAD</name>
        <dbReference type="ChEBI" id="CHEBI:57692"/>
    </ligand>
</feature>
<feature type="binding site" evidence="4">
    <location>
        <position position="35"/>
    </location>
    <ligand>
        <name>FAD</name>
        <dbReference type="ChEBI" id="CHEBI:57692"/>
    </ligand>
</feature>
<feature type="binding site" evidence="4">
    <location>
        <position position="46"/>
    </location>
    <ligand>
        <name>FAD</name>
        <dbReference type="ChEBI" id="CHEBI:57692"/>
    </ligand>
</feature>
<feature type="binding site" evidence="4">
    <location>
        <position position="47"/>
    </location>
    <ligand>
        <name>FAD</name>
        <dbReference type="ChEBI" id="CHEBI:57692"/>
    </ligand>
</feature>
<feature type="binding site" evidence="4">
    <location>
        <position position="51"/>
    </location>
    <ligand>
        <name>FAD</name>
        <dbReference type="ChEBI" id="CHEBI:57692"/>
    </ligand>
</feature>
<feature type="binding site" evidence="4">
    <location>
        <position position="53"/>
    </location>
    <ligand>
        <name>FAD</name>
        <dbReference type="ChEBI" id="CHEBI:57692"/>
    </ligand>
</feature>
<feature type="binding site" evidence="4">
    <location>
        <position position="57"/>
    </location>
    <ligand>
        <name>anthranilate</name>
        <dbReference type="ChEBI" id="CHEBI:16567"/>
        <label>2</label>
    </ligand>
</feature>
<feature type="binding site" evidence="4">
    <location>
        <position position="229"/>
    </location>
    <ligand>
        <name>(R)-lactate</name>
        <dbReference type="ChEBI" id="CHEBI:16004"/>
    </ligand>
</feature>
<feature type="binding site" evidence="4">
    <location>
        <position position="229"/>
    </location>
    <ligand>
        <name>anthranilate</name>
        <dbReference type="ChEBI" id="CHEBI:16567"/>
        <label>1</label>
    </ligand>
</feature>
<feature type="binding site" evidence="4">
    <location>
        <position position="246"/>
    </location>
    <ligand>
        <name>(R)-lactate</name>
        <dbReference type="ChEBI" id="CHEBI:16004"/>
    </ligand>
</feature>
<feature type="binding site" evidence="4">
    <location>
        <position position="246"/>
    </location>
    <ligand>
        <name>anthranilate</name>
        <dbReference type="ChEBI" id="CHEBI:16567"/>
        <label>2</label>
    </ligand>
</feature>
<feature type="binding site" evidence="4">
    <location>
        <position position="296"/>
    </location>
    <ligand>
        <name>(R)-lactate</name>
        <dbReference type="ChEBI" id="CHEBI:16004"/>
    </ligand>
</feature>
<feature type="binding site" evidence="4">
    <location>
        <position position="296"/>
    </location>
    <ligand>
        <name>anthranilate</name>
        <dbReference type="ChEBI" id="CHEBI:16567"/>
        <label>1</label>
    </ligand>
</feature>
<feature type="binding site" evidence="4">
    <location>
        <position position="296"/>
    </location>
    <ligand>
        <name>FAD</name>
        <dbReference type="ChEBI" id="CHEBI:57692"/>
    </ligand>
</feature>
<feature type="binding site" evidence="3">
    <location>
        <position position="342"/>
    </location>
    <ligand>
        <name>FAD</name>
        <dbReference type="ChEBI" id="CHEBI:57692"/>
    </ligand>
</feature>
<feature type="binding site" evidence="4">
    <location>
        <position position="345"/>
    </location>
    <ligand>
        <name>FAD</name>
        <dbReference type="ChEBI" id="CHEBI:57692"/>
    </ligand>
</feature>
<feature type="binding site" evidence="4">
    <location>
        <position position="346"/>
    </location>
    <ligand>
        <name>FAD</name>
        <dbReference type="ChEBI" id="CHEBI:57692"/>
    </ligand>
</feature>
<feature type="binding site" evidence="4">
    <location>
        <position position="347"/>
    </location>
    <ligand>
        <name>FAD</name>
        <dbReference type="ChEBI" id="CHEBI:57692"/>
    </ligand>
</feature>
<feature type="glycosylation site" description="N-linked (GlcNAc...) asparagine" evidence="6">
    <location>
        <position position="180"/>
    </location>
</feature>
<feature type="disulfide bond" evidence="3">
    <location>
        <begin position="214"/>
        <end position="271"/>
    </location>
</feature>
<organism evidence="11">
    <name type="scientific">Cryptococcus neoformans var. grubii serotype A (strain H99 / ATCC 208821 / CBS 10515 / FGSC 9487)</name>
    <name type="common">Filobasidiella neoformans var. grubii</name>
    <dbReference type="NCBI Taxonomy" id="235443"/>
    <lineage>
        <taxon>Eukaryota</taxon>
        <taxon>Fungi</taxon>
        <taxon>Dikarya</taxon>
        <taxon>Basidiomycota</taxon>
        <taxon>Agaricomycotina</taxon>
        <taxon>Tremellomycetes</taxon>
        <taxon>Tremellales</taxon>
        <taxon>Cryptococcaceae</taxon>
        <taxon>Cryptococcus</taxon>
        <taxon>Cryptococcus neoformans species complex</taxon>
    </lineage>
</organism>
<keyword id="KW-1015">Disulfide bond</keyword>
<keyword id="KW-0274">FAD</keyword>
<keyword id="KW-0285">Flavoprotein</keyword>
<keyword id="KW-0325">Glycoprotein</keyword>
<keyword id="KW-0560">Oxidoreductase</keyword>
<keyword id="KW-0576">Peroxisome</keyword>
<keyword id="KW-0732">Signal</keyword>
<proteinExistence type="evidence at transcript level"/>
<reference evidence="11" key="1">
    <citation type="journal article" date="2014" name="PLoS Genet.">
        <title>Analysis of the genome and transcriptome of Cryptococcus neoformans var. grubii reveals complex RNA expression and microevolution leading to virulence attenuation.</title>
        <authorList>
            <person name="Janbon G."/>
            <person name="Ormerod K.L."/>
            <person name="Paulet D."/>
            <person name="Byrnes E.J. III"/>
            <person name="Yadav V."/>
            <person name="Chatterjee G."/>
            <person name="Mullapudi N."/>
            <person name="Hon C.-C."/>
            <person name="Billmyre R.B."/>
            <person name="Brunel F."/>
            <person name="Bahn Y.-S."/>
            <person name="Chen W."/>
            <person name="Chen Y."/>
            <person name="Chow E.W.L."/>
            <person name="Coppee J.-Y."/>
            <person name="Floyd-Averette A."/>
            <person name="Gaillardin C."/>
            <person name="Gerik K.J."/>
            <person name="Goldberg J."/>
            <person name="Gonzalez-Hilarion S."/>
            <person name="Gujja S."/>
            <person name="Hamlin J.L."/>
            <person name="Hsueh Y.-P."/>
            <person name="Ianiri G."/>
            <person name="Jones S."/>
            <person name="Kodira C.D."/>
            <person name="Kozubowski L."/>
            <person name="Lam W."/>
            <person name="Marra M."/>
            <person name="Mesner L.D."/>
            <person name="Mieczkowski P.A."/>
            <person name="Moyrand F."/>
            <person name="Nielsen K."/>
            <person name="Proux C."/>
            <person name="Rossignol T."/>
            <person name="Schein J.E."/>
            <person name="Sun S."/>
            <person name="Wollschlaeger C."/>
            <person name="Wood I.A."/>
            <person name="Zeng Q."/>
            <person name="Neuveglise C."/>
            <person name="Newlon C.S."/>
            <person name="Perfect J.R."/>
            <person name="Lodge J.K."/>
            <person name="Idnurm A."/>
            <person name="Stajich J.E."/>
            <person name="Kronstad J.W."/>
            <person name="Sanyal K."/>
            <person name="Heitman J."/>
            <person name="Fraser J.A."/>
            <person name="Cuomo C.A."/>
            <person name="Dietrich F.S."/>
        </authorList>
    </citation>
    <scope>NUCLEOTIDE SEQUENCE [LARGE SCALE GENOMIC DNA]</scope>
    <source>
        <strain evidence="11">H99 / ATCC 208821 / CBS 10515 / FGSC 9487</strain>
    </source>
</reference>
<reference evidence="9" key="2">
    <citation type="journal article" date="2015" name="PLoS ONE">
        <title>Differences between Cryptococcus neoformans and Cryptococcus gattii in the Molecular Mechanisms Governing Utilization of D-Amino Acids as the Sole Nitrogen Source.</title>
        <authorList>
            <person name="Chang Y.C."/>
            <person name="Khanal Lamichhane A."/>
            <person name="Bradley J."/>
            <person name="Rodgers L."/>
            <person name="Ngamskulrungroj P."/>
            <person name="Kwon-Chung K.J."/>
        </authorList>
    </citation>
    <scope>FUNCTION</scope>
    <scope>INDUCTION</scope>
    <scope>DISRUPTION PHENOTYPE</scope>
</reference>
<accession>J9VPE7</accession>
<comment type="function">
    <text evidence="1 2 7">Catalyzes the oxidative deamination of D-amino acids with broad substrate specificity (By similarity). Enables the organism to utilize D-amino acids as a source of nutrients (PubMed:26132227). Enables the organism to utilize D-glutamate and D-methionine as a nitrogen source (PubMed:26132227). Protects the organism from the toxicity of D-amino acids, including from D-glutamate (PubMed:26132227). May play a role in its interaction with the host (By similarity).</text>
</comment>
<comment type="catalytic activity">
    <reaction evidence="1">
        <text>a D-alpha-amino acid + O2 + H2O = a 2-oxocarboxylate + H2O2 + NH4(+)</text>
        <dbReference type="Rhea" id="RHEA:21816"/>
        <dbReference type="ChEBI" id="CHEBI:15377"/>
        <dbReference type="ChEBI" id="CHEBI:15379"/>
        <dbReference type="ChEBI" id="CHEBI:16240"/>
        <dbReference type="ChEBI" id="CHEBI:28938"/>
        <dbReference type="ChEBI" id="CHEBI:35179"/>
        <dbReference type="ChEBI" id="CHEBI:59871"/>
        <dbReference type="EC" id="1.4.3.3"/>
    </reaction>
    <physiologicalReaction direction="left-to-right" evidence="1">
        <dbReference type="Rhea" id="RHEA:21817"/>
    </physiologicalReaction>
</comment>
<comment type="cofactor">
    <cofactor evidence="4">
        <name>FAD</name>
        <dbReference type="ChEBI" id="CHEBI:57692"/>
    </cofactor>
</comment>
<comment type="subcellular location">
    <subcellularLocation>
        <location evidence="4">Peroxisome matrix</location>
    </subcellularLocation>
</comment>
<comment type="induction">
    <text evidence="7">Expression increases when grown on D-asparagine, D-methionine or D-proline as nitrogen source.</text>
</comment>
<comment type="disruption phenotype">
    <text evidence="7">Decreases growth on D-glutamate and D-methionine nitrogen sources (PubMed:26132227). Decreases growth in presence of D-glutamate (PubMed:26132227).</text>
</comment>
<comment type="similarity">
    <text evidence="9">Belongs to the DAMOX/DASOX family.</text>
</comment>
<evidence type="ECO:0000250" key="1">
    <source>
        <dbReference type="UniProtKB" id="A0A095C6S0"/>
    </source>
</evidence>
<evidence type="ECO:0000250" key="2">
    <source>
        <dbReference type="UniProtKB" id="A0A095CCB2"/>
    </source>
</evidence>
<evidence type="ECO:0000250" key="3">
    <source>
        <dbReference type="UniProtKB" id="A0A499UB99"/>
    </source>
</evidence>
<evidence type="ECO:0000250" key="4">
    <source>
        <dbReference type="UniProtKB" id="P80324"/>
    </source>
</evidence>
<evidence type="ECO:0000255" key="5"/>
<evidence type="ECO:0000255" key="6">
    <source>
        <dbReference type="PROSITE-ProRule" id="PRU00498"/>
    </source>
</evidence>
<evidence type="ECO:0000269" key="7">
    <source>
    </source>
</evidence>
<evidence type="ECO:0000303" key="8">
    <source>
    </source>
</evidence>
<evidence type="ECO:0000305" key="9"/>
<evidence type="ECO:0000312" key="10">
    <source>
        <dbReference type="EMBL" id="AFR95301.1"/>
    </source>
</evidence>
<evidence type="ECO:0000312" key="11">
    <source>
        <dbReference type="Proteomes" id="UP000010091"/>
    </source>
</evidence>